<gene>
    <name type="primary">GLYCAM1</name>
</gene>
<name>GLCM1_HUMAN</name>
<feature type="signal peptide" evidence="1">
    <location>
        <begin position="1"/>
        <end position="18"/>
    </location>
</feature>
<feature type="chain" id="PRO_0000342397" description="Putative glycosylation-dependent cell adhesion molecule 1">
    <location>
        <begin position="19"/>
        <end position="47"/>
    </location>
</feature>
<feature type="splice variant" id="VSP_034444" description="In isoform 2." evidence="3">
    <location>
        <begin position="33"/>
        <end position="46"/>
    </location>
</feature>
<comment type="alternative products">
    <event type="alternative splicing"/>
    <isoform>
        <id>Q8IVK1-1</id>
        <name>1</name>
        <sequence type="displayed"/>
    </isoform>
    <isoform>
        <id>Q8IVK1-2</id>
        <name>2</name>
        <sequence type="described" ref="VSP_034444"/>
    </isoform>
</comment>
<comment type="tissue specificity">
    <text evidence="2">Expressed in cells harvested from milk of lactating women. Not found in other tissues.</text>
</comment>
<comment type="similarity">
    <text evidence="4">Belongs to the PP3/GlyCAM-1 family.</text>
</comment>
<comment type="caution">
    <text evidence="4">Could be the product of a pseudogene. Encodes aberrant truncated proteins.</text>
</comment>
<protein>
    <recommendedName>
        <fullName>Putative glycosylation-dependent cell adhesion molecule 1</fullName>
        <shortName>GlyCAM-1</shortName>
    </recommendedName>
</protein>
<evidence type="ECO:0000255" key="1"/>
<evidence type="ECO:0000269" key="2">
    <source>
    </source>
</evidence>
<evidence type="ECO:0000303" key="3">
    <source>
    </source>
</evidence>
<evidence type="ECO:0000305" key="4"/>
<organism>
    <name type="scientific">Homo sapiens</name>
    <name type="common">Human</name>
    <dbReference type="NCBI Taxonomy" id="9606"/>
    <lineage>
        <taxon>Eukaryota</taxon>
        <taxon>Metazoa</taxon>
        <taxon>Chordata</taxon>
        <taxon>Craniata</taxon>
        <taxon>Vertebrata</taxon>
        <taxon>Euteleostomi</taxon>
        <taxon>Mammalia</taxon>
        <taxon>Eutheria</taxon>
        <taxon>Euarchontoglires</taxon>
        <taxon>Primates</taxon>
        <taxon>Haplorrhini</taxon>
        <taxon>Catarrhini</taxon>
        <taxon>Hominidae</taxon>
        <taxon>Homo</taxon>
    </lineage>
</organism>
<accession>Q8IVK1</accession>
<accession>Q8IUA8</accession>
<sequence>MKFFMVLLPASLASTSLAILDVESGLLPQLSVLLSNRLRGKTCQTGP</sequence>
<dbReference type="EMBL" id="AJ489589">
    <property type="protein sequence ID" value="CAD34030.1"/>
    <property type="molecule type" value="mRNA"/>
</dbReference>
<dbReference type="EMBL" id="AJ489590">
    <property type="protein sequence ID" value="CAD34031.1"/>
    <property type="molecule type" value="mRNA"/>
</dbReference>
<dbReference type="EMBL" id="AJ489591">
    <property type="protein sequence ID" value="CAD34032.1"/>
    <property type="molecule type" value="mRNA"/>
</dbReference>
<dbReference type="EMBL" id="AJ489592">
    <property type="protein sequence ID" value="CAD34033.1"/>
    <property type="molecule type" value="mRNA"/>
</dbReference>
<dbReference type="EMBL" id="AJ489593">
    <property type="protein sequence ID" value="CAD34034.1"/>
    <property type="molecule type" value="mRNA"/>
</dbReference>
<dbReference type="SMR" id="Q8IVK1"/>
<dbReference type="FunCoup" id="Q8IVK1">
    <property type="interactions" value="878"/>
</dbReference>
<dbReference type="PhosphoSitePlus" id="Q8IVK1"/>
<dbReference type="BioMuta" id="HGNC:18023"/>
<dbReference type="AGR" id="HGNC:18023"/>
<dbReference type="GeneCards" id="GLYCAM1"/>
<dbReference type="HGNC" id="HGNC:18023">
    <property type="gene designation" value="GLYCAM1"/>
</dbReference>
<dbReference type="neXtProt" id="NX_Q8IVK1"/>
<dbReference type="PharmGKB" id="PA24384"/>
<dbReference type="InParanoid" id="Q8IVK1"/>
<dbReference type="PAN-GO" id="Q8IVK1">
    <property type="GO annotations" value="0 GO annotations based on evolutionary models"/>
</dbReference>
<dbReference type="PathwayCommons" id="Q8IVK1"/>
<dbReference type="Reactome" id="R-HSA-198933">
    <property type="pathway name" value="Immunoregulatory interactions between a Lymphoid and a non-Lymphoid cell"/>
</dbReference>
<dbReference type="Pharos" id="Q8IVK1">
    <property type="development level" value="Tdark"/>
</dbReference>
<dbReference type="Proteomes" id="UP000005640">
    <property type="component" value="Unplaced"/>
</dbReference>
<dbReference type="GO" id="GO:0005886">
    <property type="term" value="C:plasma membrane"/>
    <property type="evidence" value="ECO:0000304"/>
    <property type="project" value="Reactome"/>
</dbReference>
<keyword id="KW-0025">Alternative splicing</keyword>
<keyword id="KW-1185">Reference proteome</keyword>
<keyword id="KW-0732">Signal</keyword>
<proteinExistence type="uncertain"/>
<reference key="1">
    <citation type="journal article" date="2002" name="Immunol. Lett.">
        <title>Human GlyCAM-1 mRNA is expressed in the mammary gland as splicing variants and encodes various aberrant truncated proteins.</title>
        <authorList>
            <person name="Rasmussen L.K."/>
            <person name="Johnsen L.B."/>
            <person name="Petersen T.E."/>
            <person name="Sorensen E.S."/>
        </authorList>
    </citation>
    <scope>NUCLEOTIDE SEQUENCE [MRNA] (ISOFORMS 1 AND 2)</scope>
    <scope>TISSUE SPECIFICITY</scope>
    <source>
        <tissue>Mammary gland</tissue>
    </source>
</reference>